<name>NSP_MDV1</name>
<gene>
    <name type="primary">DNA-N</name>
    <name type="synonym">C6</name>
</gene>
<feature type="chain" id="PRO_0000378531" description="Putative nuclear shuttle protein">
    <location>
        <begin position="1"/>
        <end position="153"/>
    </location>
</feature>
<organismHost>
    <name type="scientific">Astragalus sinicus</name>
    <name type="common">Chinese milk vetch</name>
    <dbReference type="NCBI Taxonomy" id="47065"/>
</organismHost>
<organismHost>
    <name type="scientific">Glycine max</name>
    <name type="common">Soybean</name>
    <name type="synonym">Glycine hispida</name>
    <dbReference type="NCBI Taxonomy" id="3847"/>
</organismHost>
<organismHost>
    <name type="scientific">Phaseolus vulgaris</name>
    <name type="common">Kidney bean</name>
    <name type="synonym">French bean</name>
    <dbReference type="NCBI Taxonomy" id="3885"/>
</organismHost>
<organismHost>
    <name type="scientific">Pisum sativum</name>
    <name type="common">Garden pea</name>
    <name type="synonym">Lathyrus oleraceus</name>
    <dbReference type="NCBI Taxonomy" id="3888"/>
</organismHost>
<organismHost>
    <name type="scientific">Vicia faba</name>
    <name type="common">Broad bean</name>
    <name type="synonym">Faba vulgaris</name>
    <dbReference type="NCBI Taxonomy" id="3906"/>
</organismHost>
<keyword id="KW-1035">Host cytoplasm</keyword>
<keyword id="KW-1048">Host nucleus</keyword>
<keyword id="KW-1185">Reference proteome</keyword>
<accession>Q9Z0D0</accession>
<dbReference type="EMBL" id="AB000925">
    <property type="protein sequence ID" value="BAA33985.1"/>
    <property type="molecule type" value="Genomic_DNA"/>
</dbReference>
<dbReference type="RefSeq" id="NP_619764.1">
    <property type="nucleotide sequence ID" value="NC_003643.1"/>
</dbReference>
<dbReference type="KEGG" id="vg:995283"/>
<dbReference type="Proteomes" id="UP001507899">
    <property type="component" value="Genome"/>
</dbReference>
<dbReference type="GO" id="GO:0030430">
    <property type="term" value="C:host cell cytoplasm"/>
    <property type="evidence" value="ECO:0007669"/>
    <property type="project" value="UniProtKB-SubCell"/>
</dbReference>
<dbReference type="GO" id="GO:0042025">
    <property type="term" value="C:host cell nucleus"/>
    <property type="evidence" value="ECO:0007669"/>
    <property type="project" value="UniProtKB-SubCell"/>
</dbReference>
<dbReference type="InterPro" id="IPR008706">
    <property type="entry name" value="Nanovirus_C8"/>
</dbReference>
<dbReference type="Pfam" id="PF05629">
    <property type="entry name" value="Nanovirus_C8"/>
    <property type="match status" value="1"/>
</dbReference>
<comment type="function">
    <text>Putative nuclear shuttle protein.</text>
</comment>
<comment type="subcellular location">
    <subcellularLocation>
        <location evidence="1">Host nucleus</location>
    </subcellularLocation>
    <subcellularLocation>
        <location evidence="1">Host cytoplasm</location>
    </subcellularLocation>
</comment>
<comment type="similarity">
    <text evidence="2">Belongs to the nanoviridae nuclear shuttle protein family.</text>
</comment>
<reference key="1">
    <citation type="journal article" date="1998" name="J. Gen. Virol.">
        <title>Sequences of ten circular ssDNA components associated with the milk vetch dwarf virus genome.</title>
        <authorList>
            <person name="Sano Y."/>
            <person name="Wada M."/>
            <person name="Hashimoto Y."/>
            <person name="Matsumoto T."/>
            <person name="Kojima M."/>
        </authorList>
    </citation>
    <scope>NUCLEOTIDE SEQUENCE [GENOMIC DNA]</scope>
</reference>
<sequence length="153" mass="17300">MADWFASPLKTCTHVCDFPTLAGDPSQEITCCDSMKNKLNDSRKVLLVSCSVSFNGSFYGGNRNVRGQLQISMLEDDGVCRPIGYVPIGGYLYHNDYGYYEGEKTFNLDIESQYLKKDEDYNRKFIVSVLNENGLDSLCDLKVFIVHALRIKV</sequence>
<evidence type="ECO:0000250" key="1"/>
<evidence type="ECO:0000305" key="2"/>
<proteinExistence type="inferred from homology"/>
<organism>
    <name type="scientific">Milk vetch dwarf virus (isolate N)</name>
    <name type="common">MDV</name>
    <dbReference type="NCBI Taxonomy" id="291605"/>
    <lineage>
        <taxon>Viruses</taxon>
        <taxon>Monodnaviria</taxon>
        <taxon>Shotokuvirae</taxon>
        <taxon>Cressdnaviricota</taxon>
        <taxon>Arfiviricetes</taxon>
        <taxon>Mulpavirales</taxon>
        <taxon>Nanoviridae</taxon>
        <taxon>Nanovirus</taxon>
        <taxon>Milk vetch dwarf virus</taxon>
    </lineage>
</organism>
<protein>
    <recommendedName>
        <fullName>Putative nuclear shuttle protein</fullName>
    </recommendedName>
</protein>